<name>YPR5_ECOLX</name>
<keyword id="KW-0614">Plasmid</keyword>
<sequence>MRKAGHCPALFLLLRVPGRPHSFDLARAASDQLGRLGNARSAGAKRDDAVVHAGVTFAAGVAAGGLRQLDTLTLTLAPILVVVAGHLQGELQKHVLDGFQNDFRHSVRLGGQLRQVHHARHGQLGPFGPDRRNQALGLGQRQAADAVDLLRNDDFTRLQVRDHAQQLGPVGACAGRLLAVDAGDVVPGGPRGRYKALLAFKILLVRTGAQVDAGDLQPSSLRLLLSRRHFHGSTACGSDQRPTRLPRASCSSRSISGSAARPWKR</sequence>
<feature type="chain" id="PRO_0000068537" description="Uncharacterized 28.3 kDa protein in PAR locus">
    <location>
        <begin position="1"/>
        <end position="265"/>
    </location>
</feature>
<feature type="region of interest" description="Disordered" evidence="1">
    <location>
        <begin position="233"/>
        <end position="265"/>
    </location>
</feature>
<feature type="compositionally biased region" description="Low complexity" evidence="1">
    <location>
        <begin position="247"/>
        <end position="265"/>
    </location>
</feature>
<organism>
    <name type="scientific">Escherichia coli</name>
    <dbReference type="NCBI Taxonomy" id="562"/>
    <lineage>
        <taxon>Bacteria</taxon>
        <taxon>Pseudomonadati</taxon>
        <taxon>Pseudomonadota</taxon>
        <taxon>Gammaproteobacteria</taxon>
        <taxon>Enterobacterales</taxon>
        <taxon>Enterobacteriaceae</taxon>
        <taxon>Escherichia</taxon>
    </lineage>
</organism>
<dbReference type="EMBL" id="M59825">
    <property type="protein sequence ID" value="AAA26413.1"/>
    <property type="molecule type" value="Genomic_DNA"/>
</dbReference>
<proteinExistence type="predicted"/>
<reference key="1">
    <citation type="journal article" date="1990" name="J. Bacteriol.">
        <title>Partitioning of broad-host-range plasmid RP4 is a complex system involving site-specific recombination.</title>
        <authorList>
            <person name="Gerlitz M."/>
            <person name="Hrabak O."/>
            <person name="Schwab H."/>
        </authorList>
    </citation>
    <scope>NUCLEOTIDE SEQUENCE [GENOMIC DNA]</scope>
</reference>
<accession>P22994</accession>
<protein>
    <recommendedName>
        <fullName>Uncharacterized 28.3 kDa protein in PAR locus</fullName>
    </recommendedName>
    <alternativeName>
        <fullName>ORF 5</fullName>
    </alternativeName>
</protein>
<evidence type="ECO:0000256" key="1">
    <source>
        <dbReference type="SAM" id="MobiDB-lite"/>
    </source>
</evidence>
<geneLocation type="plasmid">
    <name>IncP-alpha RP4</name>
</geneLocation>